<proteinExistence type="uncertain"/>
<gene>
    <name type="primary">yjhD</name>
    <name type="ordered locus">b4281</name>
</gene>
<keyword id="KW-1185">Reference proteome</keyword>
<dbReference type="EMBL" id="U14003">
    <property type="protein sequence ID" value="AAA97177.1"/>
    <property type="status" value="ALT_INIT"/>
    <property type="molecule type" value="Genomic_DNA"/>
</dbReference>
<dbReference type="EMBL" id="U00096">
    <property type="status" value="NOT_ANNOTATED_CDS"/>
    <property type="molecule type" value="Genomic_DNA"/>
</dbReference>
<dbReference type="PIR" id="S56506">
    <property type="entry name" value="S56506"/>
</dbReference>
<dbReference type="FunCoup" id="P39354">
    <property type="interactions" value="19"/>
</dbReference>
<dbReference type="EchoBASE" id="EB2434"/>
<dbReference type="InParanoid" id="P39354"/>
<dbReference type="Proteomes" id="UP000000625">
    <property type="component" value="Chromosome"/>
</dbReference>
<dbReference type="Gene3D" id="2.40.128.710">
    <property type="entry name" value="Surface-adhesin protein E"/>
    <property type="match status" value="1"/>
</dbReference>
<dbReference type="InterPro" id="IPR043088">
    <property type="entry name" value="Adhesin_E"/>
</dbReference>
<dbReference type="InterPro" id="IPR031939">
    <property type="entry name" value="Adhesin_E-like"/>
</dbReference>
<dbReference type="Pfam" id="PF16747">
    <property type="entry name" value="Adhesin_E"/>
    <property type="match status" value="1"/>
</dbReference>
<sequence length="76" mass="8821">MNCETKQRTQFECIYFSQYWAKGDFIAKRAPIGQWEPYSEESLLGIIVTSVCRIKVAMLKPEPPRDPHIPLMGDFN</sequence>
<protein>
    <recommendedName>
        <fullName>Putative uncharacterized protein YjhD</fullName>
    </recommendedName>
</protein>
<comment type="caution">
    <text evidence="1">Could be the product of a pseudogene.</text>
</comment>
<comment type="sequence caution" evidence="1">
    <conflict type="erroneous initiation">
        <sequence resource="EMBL-CDS" id="AAA97177"/>
    </conflict>
</comment>
<name>YJHD_ECOLI</name>
<feature type="chain" id="PRO_0000169781" description="Putative uncharacterized protein YjhD">
    <location>
        <begin position="1"/>
        <end position="76"/>
    </location>
</feature>
<organism>
    <name type="scientific">Escherichia coli (strain K12)</name>
    <dbReference type="NCBI Taxonomy" id="83333"/>
    <lineage>
        <taxon>Bacteria</taxon>
        <taxon>Pseudomonadati</taxon>
        <taxon>Pseudomonadota</taxon>
        <taxon>Gammaproteobacteria</taxon>
        <taxon>Enterobacterales</taxon>
        <taxon>Enterobacteriaceae</taxon>
        <taxon>Escherichia</taxon>
    </lineage>
</organism>
<reference key="1">
    <citation type="journal article" date="1995" name="Nucleic Acids Res.">
        <title>Analysis of the Escherichia coli genome VI: DNA sequence of the region from 92.8 through 100 minutes.</title>
        <authorList>
            <person name="Burland V.D."/>
            <person name="Plunkett G. III"/>
            <person name="Sofia H.J."/>
            <person name="Daniels D.L."/>
            <person name="Blattner F.R."/>
        </authorList>
    </citation>
    <scope>NUCLEOTIDE SEQUENCE [LARGE SCALE GENOMIC DNA]</scope>
    <source>
        <strain>K12 / MG1655 / ATCC 47076</strain>
    </source>
</reference>
<reference key="2">
    <citation type="journal article" date="1997" name="Science">
        <title>The complete genome sequence of Escherichia coli K-12.</title>
        <authorList>
            <person name="Blattner F.R."/>
            <person name="Plunkett G. III"/>
            <person name="Bloch C.A."/>
            <person name="Perna N.T."/>
            <person name="Burland V."/>
            <person name="Riley M."/>
            <person name="Collado-Vides J."/>
            <person name="Glasner J.D."/>
            <person name="Rode C.K."/>
            <person name="Mayhew G.F."/>
            <person name="Gregor J."/>
            <person name="Davis N.W."/>
            <person name="Kirkpatrick H.A."/>
            <person name="Goeden M.A."/>
            <person name="Rose D.J."/>
            <person name="Mau B."/>
            <person name="Shao Y."/>
        </authorList>
    </citation>
    <scope>NUCLEOTIDE SEQUENCE [LARGE SCALE GENOMIC DNA]</scope>
    <source>
        <strain>K12 / MG1655 / ATCC 47076</strain>
    </source>
</reference>
<evidence type="ECO:0000305" key="1"/>
<accession>P39354</accession>
<accession>P76813</accession>